<keyword id="KW-0963">Cytoplasm</keyword>
<keyword id="KW-0396">Initiation factor</keyword>
<keyword id="KW-0648">Protein biosynthesis</keyword>
<keyword id="KW-1185">Reference proteome</keyword>
<keyword id="KW-0694">RNA-binding</keyword>
<keyword id="KW-0699">rRNA-binding</keyword>
<proteinExistence type="inferred from homology"/>
<accession>Q5HM21</accession>
<evidence type="ECO:0000255" key="1">
    <source>
        <dbReference type="HAMAP-Rule" id="MF_00075"/>
    </source>
</evidence>
<sequence length="72" mass="8266">MAKQDVIELEGTVLDTLPNAMFKVELENGHEILAHVSGKIRMNYIRILPGDKVTVEMSPYDLSRGRITYRYK</sequence>
<protein>
    <recommendedName>
        <fullName evidence="1">Translation initiation factor IF-1</fullName>
    </recommendedName>
</protein>
<organism>
    <name type="scientific">Staphylococcus epidermidis (strain ATCC 35984 / DSM 28319 / BCRC 17069 / CCUG 31568 / BM 3577 / RP62A)</name>
    <dbReference type="NCBI Taxonomy" id="176279"/>
    <lineage>
        <taxon>Bacteria</taxon>
        <taxon>Bacillati</taxon>
        <taxon>Bacillota</taxon>
        <taxon>Bacilli</taxon>
        <taxon>Bacillales</taxon>
        <taxon>Staphylococcaceae</taxon>
        <taxon>Staphylococcus</taxon>
    </lineage>
</organism>
<comment type="function">
    <text evidence="1">One of the essential components for the initiation of protein synthesis. Stabilizes the binding of IF-2 and IF-3 on the 30S subunit to which N-formylmethionyl-tRNA(fMet) subsequently binds. Helps modulate mRNA selection, yielding the 30S pre-initiation complex (PIC). Upon addition of the 50S ribosomal subunit IF-1, IF-2 and IF-3 are released leaving the mature 70S translation initiation complex.</text>
</comment>
<comment type="subunit">
    <text evidence="1">Component of the 30S ribosomal translation pre-initiation complex which assembles on the 30S ribosome in the order IF-2 and IF-3, IF-1 and N-formylmethionyl-tRNA(fMet); mRNA recruitment can occur at any time during PIC assembly.</text>
</comment>
<comment type="subcellular location">
    <subcellularLocation>
        <location evidence="1">Cytoplasm</location>
    </subcellularLocation>
</comment>
<comment type="similarity">
    <text evidence="1">Belongs to the IF-1 family.</text>
</comment>
<name>IF1_STAEQ</name>
<gene>
    <name evidence="1" type="primary">infA</name>
    <name type="ordered locus">SERP1809</name>
</gene>
<dbReference type="EMBL" id="CP000029">
    <property type="protein sequence ID" value="AAW55125.1"/>
    <property type="molecule type" value="Genomic_DNA"/>
</dbReference>
<dbReference type="RefSeq" id="WP_001829792.1">
    <property type="nucleotide sequence ID" value="NC_002976.3"/>
</dbReference>
<dbReference type="SMR" id="Q5HM21"/>
<dbReference type="STRING" id="176279.SERP1809"/>
<dbReference type="GeneID" id="93780213"/>
<dbReference type="KEGG" id="ser:SERP1809"/>
<dbReference type="eggNOG" id="COG0361">
    <property type="taxonomic scope" value="Bacteria"/>
</dbReference>
<dbReference type="HOGENOM" id="CLU_151267_1_0_9"/>
<dbReference type="Proteomes" id="UP000000531">
    <property type="component" value="Chromosome"/>
</dbReference>
<dbReference type="GO" id="GO:0005829">
    <property type="term" value="C:cytosol"/>
    <property type="evidence" value="ECO:0007669"/>
    <property type="project" value="TreeGrafter"/>
</dbReference>
<dbReference type="GO" id="GO:0043022">
    <property type="term" value="F:ribosome binding"/>
    <property type="evidence" value="ECO:0007669"/>
    <property type="project" value="UniProtKB-UniRule"/>
</dbReference>
<dbReference type="GO" id="GO:0019843">
    <property type="term" value="F:rRNA binding"/>
    <property type="evidence" value="ECO:0007669"/>
    <property type="project" value="UniProtKB-UniRule"/>
</dbReference>
<dbReference type="GO" id="GO:0003743">
    <property type="term" value="F:translation initiation factor activity"/>
    <property type="evidence" value="ECO:0007669"/>
    <property type="project" value="UniProtKB-UniRule"/>
</dbReference>
<dbReference type="CDD" id="cd04451">
    <property type="entry name" value="S1_IF1"/>
    <property type="match status" value="1"/>
</dbReference>
<dbReference type="FunFam" id="2.40.50.140:FF:000002">
    <property type="entry name" value="Translation initiation factor IF-1"/>
    <property type="match status" value="1"/>
</dbReference>
<dbReference type="Gene3D" id="2.40.50.140">
    <property type="entry name" value="Nucleic acid-binding proteins"/>
    <property type="match status" value="1"/>
</dbReference>
<dbReference type="HAMAP" id="MF_00075">
    <property type="entry name" value="IF_1"/>
    <property type="match status" value="1"/>
</dbReference>
<dbReference type="InterPro" id="IPR012340">
    <property type="entry name" value="NA-bd_OB-fold"/>
</dbReference>
<dbReference type="InterPro" id="IPR006196">
    <property type="entry name" value="RNA-binding_domain_S1_IF1"/>
</dbReference>
<dbReference type="InterPro" id="IPR003029">
    <property type="entry name" value="S1_domain"/>
</dbReference>
<dbReference type="InterPro" id="IPR004368">
    <property type="entry name" value="TIF_IF1"/>
</dbReference>
<dbReference type="NCBIfam" id="TIGR00008">
    <property type="entry name" value="infA"/>
    <property type="match status" value="1"/>
</dbReference>
<dbReference type="PANTHER" id="PTHR33370">
    <property type="entry name" value="TRANSLATION INITIATION FACTOR IF-1, CHLOROPLASTIC"/>
    <property type="match status" value="1"/>
</dbReference>
<dbReference type="PANTHER" id="PTHR33370:SF1">
    <property type="entry name" value="TRANSLATION INITIATION FACTOR IF-1, CHLOROPLASTIC"/>
    <property type="match status" value="1"/>
</dbReference>
<dbReference type="Pfam" id="PF01176">
    <property type="entry name" value="eIF-1a"/>
    <property type="match status" value="1"/>
</dbReference>
<dbReference type="SMART" id="SM00316">
    <property type="entry name" value="S1"/>
    <property type="match status" value="1"/>
</dbReference>
<dbReference type="SUPFAM" id="SSF50249">
    <property type="entry name" value="Nucleic acid-binding proteins"/>
    <property type="match status" value="1"/>
</dbReference>
<dbReference type="PROSITE" id="PS50832">
    <property type="entry name" value="S1_IF1_TYPE"/>
    <property type="match status" value="1"/>
</dbReference>
<reference key="1">
    <citation type="journal article" date="2005" name="J. Bacteriol.">
        <title>Insights on evolution of virulence and resistance from the complete genome analysis of an early methicillin-resistant Staphylococcus aureus strain and a biofilm-producing methicillin-resistant Staphylococcus epidermidis strain.</title>
        <authorList>
            <person name="Gill S.R."/>
            <person name="Fouts D.E."/>
            <person name="Archer G.L."/>
            <person name="Mongodin E.F."/>
            <person name="DeBoy R.T."/>
            <person name="Ravel J."/>
            <person name="Paulsen I.T."/>
            <person name="Kolonay J.F."/>
            <person name="Brinkac L.M."/>
            <person name="Beanan M.J."/>
            <person name="Dodson R.J."/>
            <person name="Daugherty S.C."/>
            <person name="Madupu R."/>
            <person name="Angiuoli S.V."/>
            <person name="Durkin A.S."/>
            <person name="Haft D.H."/>
            <person name="Vamathevan J.J."/>
            <person name="Khouri H."/>
            <person name="Utterback T.R."/>
            <person name="Lee C."/>
            <person name="Dimitrov G."/>
            <person name="Jiang L."/>
            <person name="Qin H."/>
            <person name="Weidman J."/>
            <person name="Tran K."/>
            <person name="Kang K.H."/>
            <person name="Hance I.R."/>
            <person name="Nelson K.E."/>
            <person name="Fraser C.M."/>
        </authorList>
    </citation>
    <scope>NUCLEOTIDE SEQUENCE [LARGE SCALE GENOMIC DNA]</scope>
    <source>
        <strain>ATCC 35984 / DSM 28319 / BCRC 17069 / CCUG 31568 / BM 3577 / RP62A</strain>
    </source>
</reference>
<feature type="chain" id="PRO_0000095872" description="Translation initiation factor IF-1">
    <location>
        <begin position="1"/>
        <end position="72"/>
    </location>
</feature>
<feature type="domain" description="S1-like" evidence="1">
    <location>
        <begin position="1"/>
        <end position="72"/>
    </location>
</feature>